<protein>
    <recommendedName>
        <fullName evidence="1">Phosphate acyltransferase</fullName>
        <ecNumber evidence="1">2.3.1.274</ecNumber>
    </recommendedName>
    <alternativeName>
        <fullName evidence="1">Acyl-ACP phosphotransacylase</fullName>
    </alternativeName>
    <alternativeName>
        <fullName evidence="1">Acyl-[acyl-carrier-protein]--phosphate acyltransferase</fullName>
    </alternativeName>
    <alternativeName>
        <fullName evidence="1">Phosphate-acyl-ACP acyltransferase</fullName>
    </alternativeName>
</protein>
<name>PLSX_CERS4</name>
<gene>
    <name evidence="1" type="primary">plsX</name>
    <name type="ordered locus">RHOS4_12020</name>
    <name type="ORF">RSP_2613</name>
</gene>
<proteinExistence type="inferred from homology"/>
<reference key="1">
    <citation type="submission" date="2005-09" db="EMBL/GenBank/DDBJ databases">
        <title>Complete sequence of chromosome 1 of Rhodobacter sphaeroides 2.4.1.</title>
        <authorList>
            <person name="Copeland A."/>
            <person name="Lucas S."/>
            <person name="Lapidus A."/>
            <person name="Barry K."/>
            <person name="Detter J.C."/>
            <person name="Glavina T."/>
            <person name="Hammon N."/>
            <person name="Israni S."/>
            <person name="Pitluck S."/>
            <person name="Richardson P."/>
            <person name="Mackenzie C."/>
            <person name="Choudhary M."/>
            <person name="Larimer F."/>
            <person name="Hauser L.J."/>
            <person name="Land M."/>
            <person name="Donohue T.J."/>
            <person name="Kaplan S."/>
        </authorList>
    </citation>
    <scope>NUCLEOTIDE SEQUENCE [LARGE SCALE GENOMIC DNA]</scope>
    <source>
        <strain>ATCC 17023 / DSM 158 / JCM 6121 / CCUG 31486 / LMG 2827 / NBRC 12203 / NCIMB 8253 / ATH 2.4.1.</strain>
    </source>
</reference>
<feature type="chain" id="PRO_1000001817" description="Phosphate acyltransferase">
    <location>
        <begin position="1"/>
        <end position="370"/>
    </location>
</feature>
<feature type="region of interest" description="Disordered" evidence="2">
    <location>
        <begin position="349"/>
        <end position="370"/>
    </location>
</feature>
<comment type="function">
    <text evidence="1">Catalyzes the reversible formation of acyl-phosphate (acyl-PO(4)) from acyl-[acyl-carrier-protein] (acyl-ACP). This enzyme utilizes acyl-ACP as fatty acyl donor, but not acyl-CoA.</text>
</comment>
<comment type="catalytic activity">
    <reaction evidence="1">
        <text>a fatty acyl-[ACP] + phosphate = an acyl phosphate + holo-[ACP]</text>
        <dbReference type="Rhea" id="RHEA:42292"/>
        <dbReference type="Rhea" id="RHEA-COMP:9685"/>
        <dbReference type="Rhea" id="RHEA-COMP:14125"/>
        <dbReference type="ChEBI" id="CHEBI:43474"/>
        <dbReference type="ChEBI" id="CHEBI:59918"/>
        <dbReference type="ChEBI" id="CHEBI:64479"/>
        <dbReference type="ChEBI" id="CHEBI:138651"/>
        <dbReference type="EC" id="2.3.1.274"/>
    </reaction>
</comment>
<comment type="pathway">
    <text evidence="1">Lipid metabolism; phospholipid metabolism.</text>
</comment>
<comment type="subunit">
    <text evidence="1">Homodimer. Probably interacts with PlsY.</text>
</comment>
<comment type="subcellular location">
    <subcellularLocation>
        <location evidence="1">Cytoplasm</location>
    </subcellularLocation>
    <text evidence="1">Associated with the membrane possibly through PlsY.</text>
</comment>
<comment type="similarity">
    <text evidence="1">Belongs to the PlsX family.</text>
</comment>
<organism>
    <name type="scientific">Cereibacter sphaeroides (strain ATCC 17023 / DSM 158 / JCM 6121 / CCUG 31486 / LMG 2827 / NBRC 12203 / NCIMB 8253 / ATH 2.4.1.)</name>
    <name type="common">Rhodobacter sphaeroides</name>
    <dbReference type="NCBI Taxonomy" id="272943"/>
    <lineage>
        <taxon>Bacteria</taxon>
        <taxon>Pseudomonadati</taxon>
        <taxon>Pseudomonadota</taxon>
        <taxon>Alphaproteobacteria</taxon>
        <taxon>Rhodobacterales</taxon>
        <taxon>Paracoccaceae</taxon>
        <taxon>Cereibacter</taxon>
    </lineage>
</organism>
<accession>Q3J364</accession>
<evidence type="ECO:0000255" key="1">
    <source>
        <dbReference type="HAMAP-Rule" id="MF_00019"/>
    </source>
</evidence>
<evidence type="ECO:0000256" key="2">
    <source>
        <dbReference type="SAM" id="MobiDB-lite"/>
    </source>
</evidence>
<keyword id="KW-0963">Cytoplasm</keyword>
<keyword id="KW-0444">Lipid biosynthesis</keyword>
<keyword id="KW-0443">Lipid metabolism</keyword>
<keyword id="KW-0594">Phospholipid biosynthesis</keyword>
<keyword id="KW-1208">Phospholipid metabolism</keyword>
<keyword id="KW-1185">Reference proteome</keyword>
<keyword id="KW-0808">Transferase</keyword>
<sequence>MASETAFQATGAGRIVISVDAMGGDRGPAAVVAGLAESASAIPGAYFIVHGDEAHLGPMIAKRKDLKGRCEIRHAPRVVTMNDKPSQVMRHGEGTSMWSCIESVRAGEATVAVSCGNTGALMAVSMIRLRKLPGVNRPAIACMWPSRNPGGFNVMLDVGADIKADAEDLAQYALMGASYARNGLSLERPRVGLLNVGTEEHKGRAELKVAQDLISANAAAGAYEFVGFIEGGDIPGRRCDVIVTDGFTGNVALKTGEGTAKLISDFLREAFGANILSKMAAVLALGSLKRLQKRIDPRRVNGGVFLGLNGTVVKSHGSADGTGVAAAIALAARLAQSGFHERLAARLASAGRAGQDAPDEMAAPGRSEKR</sequence>
<dbReference type="EC" id="2.3.1.274" evidence="1"/>
<dbReference type="EMBL" id="CP000143">
    <property type="protein sequence ID" value="ABA78770.1"/>
    <property type="molecule type" value="Genomic_DNA"/>
</dbReference>
<dbReference type="RefSeq" id="WP_011337608.1">
    <property type="nucleotide sequence ID" value="NZ_CP030271.1"/>
</dbReference>
<dbReference type="RefSeq" id="YP_352671.1">
    <property type="nucleotide sequence ID" value="NC_007493.2"/>
</dbReference>
<dbReference type="SMR" id="Q3J364"/>
<dbReference type="STRING" id="272943.RSP_2613"/>
<dbReference type="EnsemblBacteria" id="ABA78770">
    <property type="protein sequence ID" value="ABA78770"/>
    <property type="gene ID" value="RSP_2613"/>
</dbReference>
<dbReference type="GeneID" id="67446365"/>
<dbReference type="KEGG" id="rsp:RSP_2613"/>
<dbReference type="PATRIC" id="fig|272943.9.peg.1531"/>
<dbReference type="eggNOG" id="COG0416">
    <property type="taxonomic scope" value="Bacteria"/>
</dbReference>
<dbReference type="OrthoDB" id="9806408at2"/>
<dbReference type="PhylomeDB" id="Q3J364"/>
<dbReference type="UniPathway" id="UPA00085"/>
<dbReference type="Proteomes" id="UP000002703">
    <property type="component" value="Chromosome 1"/>
</dbReference>
<dbReference type="GO" id="GO:0005737">
    <property type="term" value="C:cytoplasm"/>
    <property type="evidence" value="ECO:0007669"/>
    <property type="project" value="UniProtKB-SubCell"/>
</dbReference>
<dbReference type="GO" id="GO:0043811">
    <property type="term" value="F:phosphate:acyl-[acyl carrier protein] acyltransferase activity"/>
    <property type="evidence" value="ECO:0007669"/>
    <property type="project" value="UniProtKB-UniRule"/>
</dbReference>
<dbReference type="GO" id="GO:0006633">
    <property type="term" value="P:fatty acid biosynthetic process"/>
    <property type="evidence" value="ECO:0007669"/>
    <property type="project" value="UniProtKB-UniRule"/>
</dbReference>
<dbReference type="GO" id="GO:0008654">
    <property type="term" value="P:phospholipid biosynthetic process"/>
    <property type="evidence" value="ECO:0007669"/>
    <property type="project" value="UniProtKB-KW"/>
</dbReference>
<dbReference type="Gene3D" id="3.40.718.10">
    <property type="entry name" value="Isopropylmalate Dehydrogenase"/>
    <property type="match status" value="1"/>
</dbReference>
<dbReference type="HAMAP" id="MF_00019">
    <property type="entry name" value="PlsX"/>
    <property type="match status" value="1"/>
</dbReference>
<dbReference type="InterPro" id="IPR003664">
    <property type="entry name" value="FA_synthesis"/>
</dbReference>
<dbReference type="InterPro" id="IPR012281">
    <property type="entry name" value="Phospholipid_synth_PlsX-like"/>
</dbReference>
<dbReference type="NCBIfam" id="TIGR00182">
    <property type="entry name" value="plsX"/>
    <property type="match status" value="1"/>
</dbReference>
<dbReference type="PANTHER" id="PTHR30100">
    <property type="entry name" value="FATTY ACID/PHOSPHOLIPID SYNTHESIS PROTEIN PLSX"/>
    <property type="match status" value="1"/>
</dbReference>
<dbReference type="PANTHER" id="PTHR30100:SF1">
    <property type="entry name" value="PHOSPHATE ACYLTRANSFERASE"/>
    <property type="match status" value="1"/>
</dbReference>
<dbReference type="Pfam" id="PF02504">
    <property type="entry name" value="FA_synthesis"/>
    <property type="match status" value="1"/>
</dbReference>
<dbReference type="PIRSF" id="PIRSF002465">
    <property type="entry name" value="Phsphlp_syn_PlsX"/>
    <property type="match status" value="1"/>
</dbReference>
<dbReference type="SUPFAM" id="SSF53659">
    <property type="entry name" value="Isocitrate/Isopropylmalate dehydrogenase-like"/>
    <property type="match status" value="1"/>
</dbReference>